<evidence type="ECO:0000250" key="1">
    <source>
        <dbReference type="UniProtKB" id="P36011"/>
    </source>
</evidence>
<evidence type="ECO:0000255" key="2">
    <source>
        <dbReference type="PROSITE-ProRule" id="PRU00630"/>
    </source>
</evidence>
<evidence type="ECO:0000256" key="3">
    <source>
        <dbReference type="SAM" id="MobiDB-lite"/>
    </source>
</evidence>
<evidence type="ECO:0000269" key="4">
    <source>
    </source>
</evidence>
<evidence type="ECO:0000269" key="5">
    <source>
    </source>
</evidence>
<evidence type="ECO:0000269" key="6">
    <source>
    </source>
</evidence>
<evidence type="ECO:0000269" key="7">
    <source>
    </source>
</evidence>
<evidence type="ECO:0000269" key="8">
    <source>
    </source>
</evidence>
<evidence type="ECO:0000303" key="9">
    <source>
    </source>
</evidence>
<evidence type="ECO:0000305" key="10"/>
<sequence>MNQTQPYMDVHSSHLSSAQPYASHAATAGAMAHYPQYHQQPPVLQPASTYGPASSYSQYAYPSGVASSQTAPPPPSTSMSSQVPAQLLPLPVNSHTVTAPGYGNTTGTPMQGFVYDTTGQLAPPGAKPRVTATLWEDEGSLCYQVEAKGVCVARREDNHMINGTKLLNVAGMTRGRRDGILKSEKVRHVVKIGPMHLKGVWIPFERALEFANKEKITDLLYPLFVHNIGGLLYHPTNQTRTNMVVQESQQRRLEGPPSARTPQASQPPALHHHHSMQTSIPSQMPQPPTMSSQPGARPPLDRAHTFPTPPASASSLMGLSNQSSSYDWNNQGMNSGVPNTQPLSIDTTLSNTRSMPTTPATTPPGNNLQGMQSYQSQSGYDTSKPYYSTAPPSHPHYAPQYSLSQYGQPMPPHSYIKNEMAPPAGRAPGGQSETETSDVKPADRYSQSNGHVTAGAGESAPEHESEYVQHDNTGYGASRSSYTYTTNTSVGSLAGEHSQLTNDITGSPQQNGSGRMTPRTGGGPPPQWASGYASPRPTAASSLYNIVSDTRGSSNGAGSENYTVASNTAPTYSMGGSLGSGKRGREDDDMGRPDSQGDYESKRRRTNETTVGGPVGGVLLGLQPMKAGGAMPRRR</sequence>
<keyword id="KW-0183">Conidiation</keyword>
<keyword id="KW-0238">DNA-binding</keyword>
<keyword id="KW-1185">Reference proteome</keyword>
<keyword id="KW-0749">Sporulation</keyword>
<keyword id="KW-0804">Transcription</keyword>
<keyword id="KW-0805">Transcription regulation</keyword>
<protein>
    <recommendedName>
        <fullName evidence="10">Cell pattern formation-associated protein stuA</fullName>
    </recommendedName>
    <alternativeName>
        <fullName evidence="1">Stunted protein A</fullName>
    </alternativeName>
</protein>
<name>STUA_ASPFU</name>
<comment type="function">
    <text evidence="1 4 5 6 7 8">Transcription factor that regulates asexual reproduction (PubMed:16207816, PubMed:19028996). Binds the StuA-response elements (StRE) with the consensus sequence 5'-(A/T)CGCG(T/A)N(A/C)-3' at the promoters of target genes (By similarity). Controls the expression of 6 secondary metabolite biosynthetic clusters including 2 involved in the synthesis of alkaloids (fumigaclavine and fumitremorgen), 2 clusters of the ETP class (gliotoxin and an unknown ETP-like toxin), a cluster predicted to produce pseurotin A, and the product of the last cluster is unknown (PubMed:19028996). Controls the production of ergot alkaloids during conidiophore development (PubMed:23925951). Controls expression of sspA and gliP (PubMed:18490465). Involved in the induction of immunoglobulin E-independent mast cell degranulation (PubMed:19527167).</text>
</comment>
<comment type="induction">
    <text evidence="4">Induced at the onset of developmental competence and highly expressed in competent hyphae (PubMed:16207816).</text>
</comment>
<comment type="disruption phenotype">
    <text evidence="4 6 7 8">Impairs the ability to undergo asexual reproduction with abnormal morphology of conidiophores and only small numbers of dysmorphic conidia exhibiting precocious germination (PubMed:16207816, PubMed:19028996). Displayed reduced expression of the catalase gene cat1 and hypersusceptibility to hydrogen peroxide (PubMed:16207816). Impairs the production of ergot alkaloids such as chanoclavine-I, festuclavine, fumigaclavine A, fumigaclavine B, and fumigaclavine C (PubMed:23925951). Impairs A.fumigatus immunoglobulin E-independent mast cell degranulation induction (PubMed:19527167).</text>
</comment>
<comment type="similarity">
    <text evidence="10">Belongs to the EFG1/PHD1/stuA family.</text>
</comment>
<dbReference type="EMBL" id="AAHF01000001">
    <property type="protein sequence ID" value="EAL93087.1"/>
    <property type="molecule type" value="Genomic_DNA"/>
</dbReference>
<dbReference type="RefSeq" id="XP_755125.1">
    <property type="nucleotide sequence ID" value="XM_750032.1"/>
</dbReference>
<dbReference type="SMR" id="Q4X228"/>
<dbReference type="FunCoup" id="Q4X228">
    <property type="interactions" value="1312"/>
</dbReference>
<dbReference type="STRING" id="330879.Q4X228"/>
<dbReference type="EnsemblFungi" id="EAL93087">
    <property type="protein sequence ID" value="EAL93087"/>
    <property type="gene ID" value="AFUA_2G07900"/>
</dbReference>
<dbReference type="GeneID" id="3513229"/>
<dbReference type="KEGG" id="afm:AFUA_2G07900"/>
<dbReference type="eggNOG" id="ENOG502QW2C">
    <property type="taxonomic scope" value="Eukaryota"/>
</dbReference>
<dbReference type="HOGENOM" id="CLU_016460_0_0_1"/>
<dbReference type="InParanoid" id="Q4X228"/>
<dbReference type="OMA" id="HEAEYTH"/>
<dbReference type="OrthoDB" id="5407653at2759"/>
<dbReference type="Proteomes" id="UP000002530">
    <property type="component" value="Chromosome 2"/>
</dbReference>
<dbReference type="GO" id="GO:0003677">
    <property type="term" value="F:DNA binding"/>
    <property type="evidence" value="ECO:0007669"/>
    <property type="project" value="UniProtKB-KW"/>
</dbReference>
<dbReference type="GO" id="GO:0048315">
    <property type="term" value="P:conidium formation"/>
    <property type="evidence" value="ECO:0007669"/>
    <property type="project" value="UniProtKB-KW"/>
</dbReference>
<dbReference type="GO" id="GO:0030435">
    <property type="term" value="P:sporulation resulting in formation of a cellular spore"/>
    <property type="evidence" value="ECO:0007669"/>
    <property type="project" value="UniProtKB-KW"/>
</dbReference>
<dbReference type="FunFam" id="3.10.260.10:FF:000003">
    <property type="entry name" value="Ascospore maturation 1 protein"/>
    <property type="match status" value="1"/>
</dbReference>
<dbReference type="Gene3D" id="3.10.260.10">
    <property type="entry name" value="Transcription regulator HTH, APSES-type DNA-binding domain"/>
    <property type="match status" value="1"/>
</dbReference>
<dbReference type="InterPro" id="IPR029790">
    <property type="entry name" value="EFG1/Phd1/StuA"/>
</dbReference>
<dbReference type="InterPro" id="IPR036887">
    <property type="entry name" value="HTH_APSES_sf"/>
</dbReference>
<dbReference type="InterPro" id="IPR018004">
    <property type="entry name" value="KilA/APSES_HTH"/>
</dbReference>
<dbReference type="InterPro" id="IPR003163">
    <property type="entry name" value="Tscrpt_reg_HTH_APSES-type"/>
</dbReference>
<dbReference type="PANTHER" id="PTHR47792">
    <property type="entry name" value="PROTEIN SOK2-RELATED"/>
    <property type="match status" value="1"/>
</dbReference>
<dbReference type="PANTHER" id="PTHR47792:SF1">
    <property type="entry name" value="PROTEIN SOK2-RELATED"/>
    <property type="match status" value="1"/>
</dbReference>
<dbReference type="Pfam" id="PF04383">
    <property type="entry name" value="KilA-N"/>
    <property type="match status" value="1"/>
</dbReference>
<dbReference type="SMART" id="SM01252">
    <property type="entry name" value="KilA-N"/>
    <property type="match status" value="1"/>
</dbReference>
<dbReference type="SUPFAM" id="SSF54616">
    <property type="entry name" value="DNA-binding domain of Mlu1-box binding protein MBP1"/>
    <property type="match status" value="1"/>
</dbReference>
<dbReference type="PROSITE" id="PS51299">
    <property type="entry name" value="HTH_APSES"/>
    <property type="match status" value="1"/>
</dbReference>
<proteinExistence type="evidence at transcript level"/>
<accession>Q4X228</accession>
<reference key="1">
    <citation type="journal article" date="2005" name="Nature">
        <title>Genomic sequence of the pathogenic and allergenic filamentous fungus Aspergillus fumigatus.</title>
        <authorList>
            <person name="Nierman W.C."/>
            <person name="Pain A."/>
            <person name="Anderson M.J."/>
            <person name="Wortman J.R."/>
            <person name="Kim H.S."/>
            <person name="Arroyo J."/>
            <person name="Berriman M."/>
            <person name="Abe K."/>
            <person name="Archer D.B."/>
            <person name="Bermejo C."/>
            <person name="Bennett J.W."/>
            <person name="Bowyer P."/>
            <person name="Chen D."/>
            <person name="Collins M."/>
            <person name="Coulsen R."/>
            <person name="Davies R."/>
            <person name="Dyer P.S."/>
            <person name="Farman M.L."/>
            <person name="Fedorova N."/>
            <person name="Fedorova N.D."/>
            <person name="Feldblyum T.V."/>
            <person name="Fischer R."/>
            <person name="Fosker N."/>
            <person name="Fraser A."/>
            <person name="Garcia J.L."/>
            <person name="Garcia M.J."/>
            <person name="Goble A."/>
            <person name="Goldman G.H."/>
            <person name="Gomi K."/>
            <person name="Griffith-Jones S."/>
            <person name="Gwilliam R."/>
            <person name="Haas B.J."/>
            <person name="Haas H."/>
            <person name="Harris D.E."/>
            <person name="Horiuchi H."/>
            <person name="Huang J."/>
            <person name="Humphray S."/>
            <person name="Jimenez J."/>
            <person name="Keller N."/>
            <person name="Khouri H."/>
            <person name="Kitamoto K."/>
            <person name="Kobayashi T."/>
            <person name="Konzack S."/>
            <person name="Kulkarni R."/>
            <person name="Kumagai T."/>
            <person name="Lafton A."/>
            <person name="Latge J.-P."/>
            <person name="Li W."/>
            <person name="Lord A."/>
            <person name="Lu C."/>
            <person name="Majoros W.H."/>
            <person name="May G.S."/>
            <person name="Miller B.L."/>
            <person name="Mohamoud Y."/>
            <person name="Molina M."/>
            <person name="Monod M."/>
            <person name="Mouyna I."/>
            <person name="Mulligan S."/>
            <person name="Murphy L.D."/>
            <person name="O'Neil S."/>
            <person name="Paulsen I."/>
            <person name="Penalva M.A."/>
            <person name="Pertea M."/>
            <person name="Price C."/>
            <person name="Pritchard B.L."/>
            <person name="Quail M.A."/>
            <person name="Rabbinowitsch E."/>
            <person name="Rawlins N."/>
            <person name="Rajandream M.A."/>
            <person name="Reichard U."/>
            <person name="Renauld H."/>
            <person name="Robson G.D."/>
            <person name="Rodriguez de Cordoba S."/>
            <person name="Rodriguez-Pena J.M."/>
            <person name="Ronning C.M."/>
            <person name="Rutter S."/>
            <person name="Salzberg S.L."/>
            <person name="Sanchez M."/>
            <person name="Sanchez-Ferrero J.C."/>
            <person name="Saunders D."/>
            <person name="Seeger K."/>
            <person name="Squares R."/>
            <person name="Squares S."/>
            <person name="Takeuchi M."/>
            <person name="Tekaia F."/>
            <person name="Turner G."/>
            <person name="Vazquez de Aldana C.R."/>
            <person name="Weidman J."/>
            <person name="White O."/>
            <person name="Woodward J.R."/>
            <person name="Yu J.-H."/>
            <person name="Fraser C.M."/>
            <person name="Galagan J.E."/>
            <person name="Asai K."/>
            <person name="Machida M."/>
            <person name="Hall N."/>
            <person name="Barrell B.G."/>
            <person name="Denning D.W."/>
        </authorList>
    </citation>
    <scope>NUCLEOTIDE SEQUENCE [LARGE SCALE GENOMIC DNA]</scope>
    <source>
        <strain>ATCC MYA-4609 / CBS 101355 / FGSC A1100 / Af293</strain>
    </source>
</reference>
<reference key="2">
    <citation type="journal article" date="2005" name="Mol. Biol. Cell">
        <title>The Aspergillus fumigatus StuA protein governs the up-regulation of a discrete transcriptional program during the acquisition of developmental competence.</title>
        <authorList>
            <person name="Sheppard D.C."/>
            <person name="Doedt T."/>
            <person name="Chiang L.Y."/>
            <person name="Kim H.S."/>
            <person name="Chen D."/>
            <person name="Nierman W.C."/>
            <person name="Filler S.G."/>
        </authorList>
    </citation>
    <scope>INDUCTION</scope>
    <scope>DISRUPTION PHENOTYPE</scope>
    <scope>FUNCTION</scope>
</reference>
<reference key="3">
    <citation type="journal article" date="2008" name="Infect. Immun.">
        <title>In vivo analysis of Aspergillus fumigatus developmental gene expression determined by real-time reverse transcription-PCR.</title>
        <authorList>
            <person name="Gravelat F.N."/>
            <person name="Doedt T."/>
            <person name="Chiang L.Y."/>
            <person name="Liu H."/>
            <person name="Filler S.G."/>
            <person name="Patterson T.F."/>
            <person name="Sheppard D.C."/>
        </authorList>
    </citation>
    <scope>FUNCTION</scope>
</reference>
<reference key="4">
    <citation type="journal article" date="2009" name="Eukaryot. Cell">
        <title>Transcriptional profiling identifies a role for BrlA in the response to nitrogen depletion and for StuA in the regulation of secondary metabolite clusters in Aspergillus fumigatus.</title>
        <authorList>
            <person name="Twumasi-Boateng K."/>
            <person name="Yu Y."/>
            <person name="Chen D."/>
            <person name="Gravelat F.N."/>
            <person name="Nierman W.C."/>
            <person name="Sheppard D.C."/>
        </authorList>
    </citation>
    <scope>DISRUPTION PHENOTYPE</scope>
    <scope>FUNCTION</scope>
</reference>
<reference key="5">
    <citation type="journal article" date="2009" name="J. Infect. Dis.">
        <title>Aspergillus fumigatus induces immunoglobulin E-independent mast cell degranulation.</title>
        <authorList>
            <person name="Urb M."/>
            <person name="Pouliot P."/>
            <person name="Gravelat F.N."/>
            <person name="Olivier M."/>
            <person name="Sheppard D.C."/>
        </authorList>
    </citation>
    <scope>DISRUPTION PHENOTYPE</scope>
    <scope>FUNCTION</scope>
</reference>
<reference key="6">
    <citation type="journal article" date="2014" name="Curr. Microbiol.">
        <title>Accumulation of ergot alkaloids during conidiophore development in Aspergillus fumigatus.</title>
        <authorList>
            <person name="Mulinti P."/>
            <person name="Allen N.A."/>
            <person name="Coyle C.M."/>
            <person name="Gravelat F.N."/>
            <person name="Sheppard D.C."/>
            <person name="Panaccione D.G."/>
        </authorList>
    </citation>
    <scope>DISRUPTION PHENOTYPE</scope>
    <scope>FUNCTION</scope>
</reference>
<gene>
    <name evidence="9" type="primary">stuA</name>
    <name type="ORF">AFUA_2G07900</name>
</gene>
<organism>
    <name type="scientific">Aspergillus fumigatus (strain ATCC MYA-4609 / CBS 101355 / FGSC A1100 / Af293)</name>
    <name type="common">Neosartorya fumigata</name>
    <dbReference type="NCBI Taxonomy" id="330879"/>
    <lineage>
        <taxon>Eukaryota</taxon>
        <taxon>Fungi</taxon>
        <taxon>Dikarya</taxon>
        <taxon>Ascomycota</taxon>
        <taxon>Pezizomycotina</taxon>
        <taxon>Eurotiomycetes</taxon>
        <taxon>Eurotiomycetidae</taxon>
        <taxon>Eurotiales</taxon>
        <taxon>Aspergillaceae</taxon>
        <taxon>Aspergillus</taxon>
        <taxon>Aspergillus subgen. Fumigati</taxon>
    </lineage>
</organism>
<feature type="chain" id="PRO_0000435970" description="Cell pattern formation-associated protein stuA">
    <location>
        <begin position="1"/>
        <end position="635"/>
    </location>
</feature>
<feature type="domain" description="HTH APSES-type" evidence="2">
    <location>
        <begin position="129"/>
        <end position="235"/>
    </location>
</feature>
<feature type="DNA-binding region" description="H-T-H motif" evidence="2">
    <location>
        <begin position="163"/>
        <end position="184"/>
    </location>
</feature>
<feature type="region of interest" description="Disordered" evidence="3">
    <location>
        <begin position="1"/>
        <end position="21"/>
    </location>
</feature>
<feature type="region of interest" description="Disordered" evidence="3">
    <location>
        <begin position="63"/>
        <end position="82"/>
    </location>
</feature>
<feature type="region of interest" description="Disordered" evidence="3">
    <location>
        <begin position="246"/>
        <end position="480"/>
    </location>
</feature>
<feature type="region of interest" description="Disordered" evidence="3">
    <location>
        <begin position="498"/>
        <end position="635"/>
    </location>
</feature>
<feature type="region of interest" description="Nuclear localization domain" evidence="1">
    <location>
        <begin position="582"/>
        <end position="605"/>
    </location>
</feature>
<feature type="compositionally biased region" description="Low complexity" evidence="3">
    <location>
        <begin position="276"/>
        <end position="294"/>
    </location>
</feature>
<feature type="compositionally biased region" description="Low complexity" evidence="3">
    <location>
        <begin position="312"/>
        <end position="325"/>
    </location>
</feature>
<feature type="compositionally biased region" description="Polar residues" evidence="3">
    <location>
        <begin position="326"/>
        <end position="355"/>
    </location>
</feature>
<feature type="compositionally biased region" description="Low complexity" evidence="3">
    <location>
        <begin position="356"/>
        <end position="380"/>
    </location>
</feature>
<feature type="compositionally biased region" description="Basic and acidic residues" evidence="3">
    <location>
        <begin position="460"/>
        <end position="469"/>
    </location>
</feature>
<feature type="compositionally biased region" description="Polar residues" evidence="3">
    <location>
        <begin position="498"/>
        <end position="513"/>
    </location>
</feature>
<feature type="compositionally biased region" description="Polar residues" evidence="3">
    <location>
        <begin position="539"/>
        <end position="571"/>
    </location>
</feature>
<feature type="compositionally biased region" description="Basic and acidic residues" evidence="3">
    <location>
        <begin position="583"/>
        <end position="592"/>
    </location>
</feature>